<sequence>MQDVKTYLSTAPVLAAIWFGILAGLLIEINRFFPDALVLPYV</sequence>
<proteinExistence type="inferred from homology"/>
<dbReference type="EMBL" id="AY958085">
    <property type="protein sequence ID" value="AAX45719.1"/>
    <property type="molecule type" value="Genomic_DNA"/>
</dbReference>
<dbReference type="RefSeq" id="YP_636440.1">
    <property type="nucleotide sequence ID" value="NC_008116.1"/>
</dbReference>
<dbReference type="SMR" id="Q32RT6"/>
<dbReference type="GeneID" id="4108678"/>
<dbReference type="GO" id="GO:0009535">
    <property type="term" value="C:chloroplast thylakoid membrane"/>
    <property type="evidence" value="ECO:0007669"/>
    <property type="project" value="UniProtKB-SubCell"/>
</dbReference>
<dbReference type="GO" id="GO:0009522">
    <property type="term" value="C:photosystem I"/>
    <property type="evidence" value="ECO:0007669"/>
    <property type="project" value="UniProtKB-KW"/>
</dbReference>
<dbReference type="GO" id="GO:0015979">
    <property type="term" value="P:photosynthesis"/>
    <property type="evidence" value="ECO:0007669"/>
    <property type="project" value="UniProtKB-UniRule"/>
</dbReference>
<dbReference type="Gene3D" id="1.20.5.510">
    <property type="entry name" value="Single helix bin"/>
    <property type="match status" value="1"/>
</dbReference>
<dbReference type="HAMAP" id="MF_00522">
    <property type="entry name" value="PSI_PsaJ"/>
    <property type="match status" value="1"/>
</dbReference>
<dbReference type="InterPro" id="IPR002615">
    <property type="entry name" value="PSI_PsaJ"/>
</dbReference>
<dbReference type="InterPro" id="IPR036062">
    <property type="entry name" value="PSI_PsaJ_sf"/>
</dbReference>
<dbReference type="PANTHER" id="PTHR36082">
    <property type="match status" value="1"/>
</dbReference>
<dbReference type="PANTHER" id="PTHR36082:SF2">
    <property type="entry name" value="PHOTOSYSTEM I REACTION CENTER SUBUNIT IX"/>
    <property type="match status" value="1"/>
</dbReference>
<dbReference type="Pfam" id="PF01701">
    <property type="entry name" value="PSI_PsaJ"/>
    <property type="match status" value="1"/>
</dbReference>
<dbReference type="SUPFAM" id="SSF81544">
    <property type="entry name" value="Subunit IX of photosystem I reaction centre, PsaJ"/>
    <property type="match status" value="1"/>
</dbReference>
<organism>
    <name type="scientific">Staurastrum punctulatum</name>
    <name type="common">Green alga</name>
    <name type="synonym">Cosmoastrum punctulatum</name>
    <dbReference type="NCBI Taxonomy" id="102822"/>
    <lineage>
        <taxon>Eukaryota</taxon>
        <taxon>Viridiplantae</taxon>
        <taxon>Streptophyta</taxon>
        <taxon>Zygnematophyceae</taxon>
        <taxon>Zygnematophycidae</taxon>
        <taxon>Desmidiales</taxon>
        <taxon>Desmidiaceae</taxon>
        <taxon>Staurastrum</taxon>
    </lineage>
</organism>
<name>PSAJ_STAPU</name>
<gene>
    <name evidence="1" type="primary">psaJ</name>
</gene>
<evidence type="ECO:0000255" key="1">
    <source>
        <dbReference type="HAMAP-Rule" id="MF_00522"/>
    </source>
</evidence>
<geneLocation type="chloroplast"/>
<feature type="chain" id="PRO_0000276079" description="Photosystem I reaction center subunit IX">
    <location>
        <begin position="1"/>
        <end position="42"/>
    </location>
</feature>
<feature type="transmembrane region" description="Helical" evidence="1">
    <location>
        <begin position="7"/>
        <end position="27"/>
    </location>
</feature>
<keyword id="KW-0150">Chloroplast</keyword>
<keyword id="KW-0472">Membrane</keyword>
<keyword id="KW-0602">Photosynthesis</keyword>
<keyword id="KW-0603">Photosystem I</keyword>
<keyword id="KW-0934">Plastid</keyword>
<keyword id="KW-0793">Thylakoid</keyword>
<keyword id="KW-0812">Transmembrane</keyword>
<keyword id="KW-1133">Transmembrane helix</keyword>
<accession>Q32RT6</accession>
<comment type="function">
    <text evidence="1">May help in the organization of the PsaE and PsaF subunits.</text>
</comment>
<comment type="subcellular location">
    <subcellularLocation>
        <location evidence="1">Plastid</location>
        <location evidence="1">Chloroplast thylakoid membrane</location>
        <topology evidence="1">Single-pass membrane protein</topology>
    </subcellularLocation>
</comment>
<comment type="similarity">
    <text evidence="1">Belongs to the PsaJ family.</text>
</comment>
<protein>
    <recommendedName>
        <fullName evidence="1">Photosystem I reaction center subunit IX</fullName>
    </recommendedName>
    <alternativeName>
        <fullName evidence="1">PSI-J</fullName>
    </alternativeName>
</protein>
<reference key="1">
    <citation type="journal article" date="2005" name="BMC Biol.">
        <title>The complete chloroplast DNA sequences of the charophycean green algae Staurastrum and Zygnema reveal that the chloroplast genome underwent extensive changes during the evolution of the Zygnematales.</title>
        <authorList>
            <person name="Turmel M."/>
            <person name="Otis C."/>
            <person name="Lemieux C."/>
        </authorList>
    </citation>
    <scope>NUCLEOTIDE SEQUENCE [LARGE SCALE GENOMIC DNA]</scope>
</reference>